<organism>
    <name type="scientific">Mus musculus</name>
    <name type="common">Mouse</name>
    <dbReference type="NCBI Taxonomy" id="10090"/>
    <lineage>
        <taxon>Eukaryota</taxon>
        <taxon>Metazoa</taxon>
        <taxon>Chordata</taxon>
        <taxon>Craniata</taxon>
        <taxon>Vertebrata</taxon>
        <taxon>Euteleostomi</taxon>
        <taxon>Mammalia</taxon>
        <taxon>Eutheria</taxon>
        <taxon>Euarchontoglires</taxon>
        <taxon>Glires</taxon>
        <taxon>Rodentia</taxon>
        <taxon>Myomorpha</taxon>
        <taxon>Muroidea</taxon>
        <taxon>Muridae</taxon>
        <taxon>Murinae</taxon>
        <taxon>Mus</taxon>
        <taxon>Mus</taxon>
    </lineage>
</organism>
<protein>
    <recommendedName>
        <fullName evidence="13">Mitochondrial sodium/calcium exchanger protein</fullName>
    </recommendedName>
    <alternativeName>
        <fullName evidence="9">Na(+)/K(+)/Ca(2+)-exchange protein 6</fullName>
    </alternativeName>
    <alternativeName>
        <fullName evidence="12">Sodium/calcium exchanger protein, mitochondrial</fullName>
    </alternativeName>
    <alternativeName>
        <fullName evidence="9">Sodium/potassium/calcium exchanger 6</fullName>
    </alternativeName>
    <alternativeName>
        <fullName evidence="17">Solute carrier family 24 member 6</fullName>
    </alternativeName>
    <alternativeName>
        <fullName evidence="17">Solute carrier family 8 member B1</fullName>
    </alternativeName>
</protein>
<accession>Q925Q3</accession>
<accession>Q3U067</accession>
<accession>Q80XM7</accession>
<name>NCLX_MOUSE</name>
<evidence type="ECO:0000250" key="1">
    <source>
        <dbReference type="UniProtKB" id="Q6J4K2"/>
    </source>
</evidence>
<evidence type="ECO:0000255" key="2"/>
<evidence type="ECO:0000269" key="3">
    <source>
    </source>
</evidence>
<evidence type="ECO:0000269" key="4">
    <source>
    </source>
</evidence>
<evidence type="ECO:0000269" key="5">
    <source>
    </source>
</evidence>
<evidence type="ECO:0000269" key="6">
    <source>
    </source>
</evidence>
<evidence type="ECO:0000269" key="7">
    <source>
    </source>
</evidence>
<evidence type="ECO:0000269" key="8">
    <source>
    </source>
</evidence>
<evidence type="ECO:0000303" key="9">
    <source>
    </source>
</evidence>
<evidence type="ECO:0000303" key="10">
    <source>
    </source>
</evidence>
<evidence type="ECO:0000303" key="11">
    <source>
    </source>
</evidence>
<evidence type="ECO:0000303" key="12">
    <source>
    </source>
</evidence>
<evidence type="ECO:0000305" key="13"/>
<evidence type="ECO:0000305" key="14">
    <source>
    </source>
</evidence>
<evidence type="ECO:0000305" key="15">
    <source>
    </source>
</evidence>
<evidence type="ECO:0000305" key="16">
    <source>
    </source>
</evidence>
<evidence type="ECO:0000312" key="17">
    <source>
        <dbReference type="MGI" id="MGI:2180781"/>
    </source>
</evidence>
<dbReference type="EMBL" id="AF261233">
    <property type="protein sequence ID" value="AAK49407.1"/>
    <property type="molecule type" value="mRNA"/>
</dbReference>
<dbReference type="EMBL" id="AK157173">
    <property type="protein sequence ID" value="BAE33988.1"/>
    <property type="molecule type" value="mRNA"/>
</dbReference>
<dbReference type="EMBL" id="BC043689">
    <property type="protein sequence ID" value="AAH43689.1"/>
    <property type="molecule type" value="mRNA"/>
</dbReference>
<dbReference type="CCDS" id="CCDS39238.1">
    <molecule id="Q925Q3-1"/>
</dbReference>
<dbReference type="CCDS" id="CCDS51633.1">
    <molecule id="Q925Q3-2"/>
</dbReference>
<dbReference type="CCDS" id="CCDS51634.1">
    <molecule id="Q925Q3-3"/>
</dbReference>
<dbReference type="RefSeq" id="NP_001171065.1">
    <molecule id="Q925Q3-3"/>
    <property type="nucleotide sequence ID" value="NM_001177594.1"/>
</dbReference>
<dbReference type="RefSeq" id="NP_001171066.1">
    <molecule id="Q925Q3-2"/>
    <property type="nucleotide sequence ID" value="NM_001177595.1"/>
</dbReference>
<dbReference type="RefSeq" id="NP_573484.2">
    <molecule id="Q925Q3-1"/>
    <property type="nucleotide sequence ID" value="NM_133221.2"/>
</dbReference>
<dbReference type="BioGRID" id="228418">
    <property type="interactions" value="5"/>
</dbReference>
<dbReference type="FunCoup" id="Q925Q3">
    <property type="interactions" value="353"/>
</dbReference>
<dbReference type="STRING" id="10090.ENSMUSP00000064714"/>
<dbReference type="GlyCosmos" id="Q925Q3">
    <property type="glycosylation" value="1 site, No reported glycans"/>
</dbReference>
<dbReference type="GlyGen" id="Q925Q3">
    <property type="glycosylation" value="2 sites, 2 N-linked glycans (2 sites)"/>
</dbReference>
<dbReference type="PhosphoSitePlus" id="Q925Q3"/>
<dbReference type="SwissPalm" id="Q925Q3"/>
<dbReference type="jPOST" id="Q925Q3"/>
<dbReference type="PaxDb" id="10090-ENSMUSP00000064714"/>
<dbReference type="ProteomicsDB" id="252792">
    <molecule id="Q925Q3-1"/>
</dbReference>
<dbReference type="ProteomicsDB" id="252793">
    <molecule id="Q925Q3-2"/>
</dbReference>
<dbReference type="ProteomicsDB" id="252794">
    <molecule id="Q925Q3-3"/>
</dbReference>
<dbReference type="Antibodypedia" id="31257">
    <property type="antibodies" value="92 antibodies from 26 providers"/>
</dbReference>
<dbReference type="DNASU" id="170756"/>
<dbReference type="Ensembl" id="ENSMUST00000068326.14">
    <molecule id="Q925Q3-1"/>
    <property type="protein sequence ID" value="ENSMUSP00000064714.8"/>
    <property type="gene ID" value="ENSMUSG00000032754.15"/>
</dbReference>
<dbReference type="Ensembl" id="ENSMUST00000076051.12">
    <molecule id="Q925Q3-2"/>
    <property type="protein sequence ID" value="ENSMUSP00000075428.6"/>
    <property type="gene ID" value="ENSMUSG00000032754.15"/>
</dbReference>
<dbReference type="Ensembl" id="ENSMUST00000111890.9">
    <molecule id="Q925Q3-3"/>
    <property type="protein sequence ID" value="ENSMUSP00000107521.3"/>
    <property type="gene ID" value="ENSMUSG00000032754.15"/>
</dbReference>
<dbReference type="GeneID" id="170756"/>
<dbReference type="KEGG" id="mmu:170756"/>
<dbReference type="UCSC" id="uc008zhj.2">
    <molecule id="Q925Q3-1"/>
    <property type="organism name" value="mouse"/>
</dbReference>
<dbReference type="UCSC" id="uc012eco.1">
    <molecule id="Q925Q3-3"/>
    <property type="organism name" value="mouse"/>
</dbReference>
<dbReference type="UCSC" id="uc012ecp.1">
    <molecule id="Q925Q3-2"/>
    <property type="organism name" value="mouse"/>
</dbReference>
<dbReference type="AGR" id="MGI:2180781"/>
<dbReference type="CTD" id="80024"/>
<dbReference type="MGI" id="MGI:2180781">
    <property type="gene designation" value="Slc8b1"/>
</dbReference>
<dbReference type="VEuPathDB" id="HostDB:ENSMUSG00000032754"/>
<dbReference type="eggNOG" id="KOG2399">
    <property type="taxonomic scope" value="Eukaryota"/>
</dbReference>
<dbReference type="GeneTree" id="ENSGT00940000157433"/>
<dbReference type="HOGENOM" id="CLU_004979_3_2_1"/>
<dbReference type="InParanoid" id="Q925Q3"/>
<dbReference type="OMA" id="IWIMNIA"/>
<dbReference type="OrthoDB" id="407410at2759"/>
<dbReference type="PhylomeDB" id="Q925Q3"/>
<dbReference type="TreeFam" id="TF323444"/>
<dbReference type="Reactome" id="R-MMU-425561">
    <property type="pathway name" value="Sodium/Calcium exchangers"/>
</dbReference>
<dbReference type="Reactome" id="R-MMU-8949215">
    <property type="pathway name" value="Mitochondrial calcium ion transport"/>
</dbReference>
<dbReference type="BioGRID-ORCS" id="170756">
    <property type="hits" value="2 hits in 77 CRISPR screens"/>
</dbReference>
<dbReference type="ChiTaRS" id="Slc8b1">
    <property type="organism name" value="mouse"/>
</dbReference>
<dbReference type="PRO" id="PR:Q925Q3"/>
<dbReference type="Proteomes" id="UP000000589">
    <property type="component" value="Chromosome 5"/>
</dbReference>
<dbReference type="RNAct" id="Q925Q3">
    <property type="molecule type" value="protein"/>
</dbReference>
<dbReference type="Bgee" id="ENSMUSG00000032754">
    <property type="expression patterns" value="Expressed in granulocyte and 188 other cell types or tissues"/>
</dbReference>
<dbReference type="ExpressionAtlas" id="Q925Q3">
    <property type="expression patterns" value="baseline and differential"/>
</dbReference>
<dbReference type="GO" id="GO:0030061">
    <property type="term" value="C:mitochondrial crista"/>
    <property type="evidence" value="ECO:0000250"/>
    <property type="project" value="BHF-UCL"/>
</dbReference>
<dbReference type="GO" id="GO:0005743">
    <property type="term" value="C:mitochondrial inner membrane"/>
    <property type="evidence" value="ECO:0000266"/>
    <property type="project" value="MGI"/>
</dbReference>
<dbReference type="GO" id="GO:0031966">
    <property type="term" value="C:mitochondrial membrane"/>
    <property type="evidence" value="ECO:0000250"/>
    <property type="project" value="UniProtKB"/>
</dbReference>
<dbReference type="GO" id="GO:0005739">
    <property type="term" value="C:mitochondrion"/>
    <property type="evidence" value="ECO:0000314"/>
    <property type="project" value="UniProtKB"/>
</dbReference>
<dbReference type="GO" id="GO:0005886">
    <property type="term" value="C:plasma membrane"/>
    <property type="evidence" value="ECO:0000314"/>
    <property type="project" value="MGI"/>
</dbReference>
<dbReference type="GO" id="GO:0042383">
    <property type="term" value="C:sarcolemma"/>
    <property type="evidence" value="ECO:0000266"/>
    <property type="project" value="MGI"/>
</dbReference>
<dbReference type="GO" id="GO:0005432">
    <property type="term" value="F:calcium:sodium antiporter activity"/>
    <property type="evidence" value="ECO:0000314"/>
    <property type="project" value="BHF-UCL"/>
</dbReference>
<dbReference type="GO" id="GO:0086038">
    <property type="term" value="F:calcium:sodium antiporter activity involved in regulation of cardiac muscle cell membrane potential"/>
    <property type="evidence" value="ECO:0000315"/>
    <property type="project" value="UniProtKB"/>
</dbReference>
<dbReference type="GO" id="GO:0042803">
    <property type="term" value="F:protein homodimerization activity"/>
    <property type="evidence" value="ECO:0000353"/>
    <property type="project" value="BHF-UCL"/>
</dbReference>
<dbReference type="GO" id="GO:0099093">
    <property type="term" value="P:calcium export from the mitochondrion"/>
    <property type="evidence" value="ECO:0000315"/>
    <property type="project" value="UniProtKB"/>
</dbReference>
<dbReference type="GO" id="GO:0070588">
    <property type="term" value="P:calcium ion transmembrane transport"/>
    <property type="evidence" value="ECO:0000314"/>
    <property type="project" value="MGI"/>
</dbReference>
<dbReference type="GO" id="GO:0042593">
    <property type="term" value="P:glucose homeostasis"/>
    <property type="evidence" value="ECO:0000250"/>
    <property type="project" value="UniProtKB"/>
</dbReference>
<dbReference type="GO" id="GO:0051560">
    <property type="term" value="P:mitochondrial calcium ion homeostasis"/>
    <property type="evidence" value="ECO:0000314"/>
    <property type="project" value="BHF-UCL"/>
</dbReference>
<dbReference type="GO" id="GO:0006851">
    <property type="term" value="P:mitochondrial calcium ion transmembrane transport"/>
    <property type="evidence" value="ECO:0000314"/>
    <property type="project" value="MGI"/>
</dbReference>
<dbReference type="GO" id="GO:0086036">
    <property type="term" value="P:regulation of cardiac muscle cell membrane potential"/>
    <property type="evidence" value="ECO:0000305"/>
    <property type="project" value="BHF-UCL"/>
</dbReference>
<dbReference type="GO" id="GO:0051480">
    <property type="term" value="P:regulation of cytosolic calcium ion concentration"/>
    <property type="evidence" value="ECO:0000314"/>
    <property type="project" value="BHF-UCL"/>
</dbReference>
<dbReference type="GO" id="GO:0050796">
    <property type="term" value="P:regulation of insulin secretion"/>
    <property type="evidence" value="ECO:0000250"/>
    <property type="project" value="UniProtKB"/>
</dbReference>
<dbReference type="GO" id="GO:1901623">
    <property type="term" value="P:regulation of lymphocyte chemotaxis"/>
    <property type="evidence" value="ECO:0000315"/>
    <property type="project" value="UniProtKB"/>
</dbReference>
<dbReference type="GO" id="GO:2001256">
    <property type="term" value="P:regulation of store-operated calcium entry"/>
    <property type="evidence" value="ECO:0007669"/>
    <property type="project" value="Ensembl"/>
</dbReference>
<dbReference type="GO" id="GO:0035725">
    <property type="term" value="P:sodium ion transmembrane transport"/>
    <property type="evidence" value="ECO:0000314"/>
    <property type="project" value="MGI"/>
</dbReference>
<dbReference type="FunFam" id="1.20.1420.30:FF:000023">
    <property type="entry name" value="Mitochondrial sodium/calcium exchanger protein"/>
    <property type="match status" value="1"/>
</dbReference>
<dbReference type="FunFam" id="1.20.1420.30:FF:000025">
    <property type="entry name" value="sodium/potassium/calcium exchanger 6, mitochondrial isoform X3"/>
    <property type="match status" value="1"/>
</dbReference>
<dbReference type="Gene3D" id="1.20.1420.30">
    <property type="entry name" value="NCX, central ion-binding region"/>
    <property type="match status" value="2"/>
</dbReference>
<dbReference type="InterPro" id="IPR051359">
    <property type="entry name" value="CaCA_antiporter"/>
</dbReference>
<dbReference type="InterPro" id="IPR004837">
    <property type="entry name" value="NaCa_Exmemb"/>
</dbReference>
<dbReference type="InterPro" id="IPR044880">
    <property type="entry name" value="NCX_ion-bd_dom_sf"/>
</dbReference>
<dbReference type="PANTHER" id="PTHR12266:SF0">
    <property type="entry name" value="MITOCHONDRIAL SODIUM_CALCIUM EXCHANGER PROTEIN"/>
    <property type="match status" value="1"/>
</dbReference>
<dbReference type="PANTHER" id="PTHR12266">
    <property type="entry name" value="NA+/CA2+ K+ INDEPENDENT EXCHANGER"/>
    <property type="match status" value="1"/>
</dbReference>
<dbReference type="Pfam" id="PF01699">
    <property type="entry name" value="Na_Ca_ex"/>
    <property type="match status" value="2"/>
</dbReference>
<gene>
    <name evidence="17" type="primary">Slc8b1</name>
    <name evidence="9" type="synonym">Nckx6</name>
    <name evidence="12" type="synonym">Nclx</name>
    <name evidence="17" type="synonym">Slc24a6</name>
</gene>
<feature type="signal peptide" evidence="2">
    <location>
        <begin position="1"/>
        <end position="26"/>
    </location>
</feature>
<feature type="chain" id="PRO_0000045757" description="Mitochondrial sodium/calcium exchanger protein">
    <location>
        <begin position="27"/>
        <end position="585"/>
    </location>
</feature>
<feature type="topological domain" description="Extracellular" evidence="2">
    <location>
        <begin position="27"/>
        <end position="95"/>
    </location>
</feature>
<feature type="transmembrane region" description="Helical; Name=1" evidence="2">
    <location>
        <begin position="96"/>
        <end position="116"/>
    </location>
</feature>
<feature type="topological domain" description="Cytoplasmic" evidence="2">
    <location>
        <begin position="117"/>
        <end position="140"/>
    </location>
</feature>
<feature type="transmembrane region" description="Helical; Name=2" evidence="2">
    <location>
        <begin position="141"/>
        <end position="161"/>
    </location>
</feature>
<feature type="topological domain" description="Extracellular" evidence="2">
    <location>
        <begin position="162"/>
        <end position="168"/>
    </location>
</feature>
<feature type="transmembrane region" description="Helical; Name=3" evidence="2">
    <location>
        <begin position="169"/>
        <end position="189"/>
    </location>
</feature>
<feature type="topological domain" description="Cytoplasmic" evidence="2">
    <location>
        <begin position="190"/>
        <end position="205"/>
    </location>
</feature>
<feature type="transmembrane region" description="Helical; Name=4" evidence="2">
    <location>
        <begin position="206"/>
        <end position="226"/>
    </location>
</feature>
<feature type="topological domain" description="Extracellular" evidence="2">
    <location>
        <begin position="227"/>
        <end position="229"/>
    </location>
</feature>
<feature type="transmembrane region" description="Helical; Name=5" evidence="2">
    <location>
        <begin position="230"/>
        <end position="250"/>
    </location>
</feature>
<feature type="topological domain" description="Cytoplasmic" evidence="2">
    <location>
        <begin position="251"/>
        <end position="325"/>
    </location>
</feature>
<feature type="transmembrane region" description="Helical; Name=6" evidence="2">
    <location>
        <begin position="326"/>
        <end position="346"/>
    </location>
</feature>
<feature type="topological domain" description="Extracellular" evidence="2">
    <location>
        <begin position="347"/>
        <end position="360"/>
    </location>
</feature>
<feature type="transmembrane region" description="Helical; Name=7" evidence="2">
    <location>
        <begin position="361"/>
        <end position="381"/>
    </location>
</feature>
<feature type="topological domain" description="Cytoplasmic" evidence="2">
    <location>
        <begin position="382"/>
        <end position="383"/>
    </location>
</feature>
<feature type="transmembrane region" description="Helical; Name=8" evidence="2">
    <location>
        <begin position="384"/>
        <end position="404"/>
    </location>
</feature>
<feature type="topological domain" description="Extracellular" evidence="2">
    <location>
        <begin position="405"/>
        <end position="416"/>
    </location>
</feature>
<feature type="transmembrane region" description="Helical; Name=9" evidence="2">
    <location>
        <begin position="417"/>
        <end position="437"/>
    </location>
</feature>
<feature type="topological domain" description="Cytoplasmic" evidence="2">
    <location>
        <begin position="438"/>
        <end position="445"/>
    </location>
</feature>
<feature type="transmembrane region" description="Helical; Name=10" evidence="2">
    <location>
        <begin position="446"/>
        <end position="466"/>
    </location>
</feature>
<feature type="topological domain" description="Extracellular" evidence="2">
    <location>
        <begin position="467"/>
        <end position="491"/>
    </location>
</feature>
<feature type="transmembrane region" description="Helical; Name=11" evidence="2">
    <location>
        <begin position="492"/>
        <end position="512"/>
    </location>
</feature>
<feature type="topological domain" description="Cytoplasmic" evidence="2">
    <location>
        <begin position="513"/>
        <end position="525"/>
    </location>
</feature>
<feature type="transmembrane region" description="Helical; Name=12" evidence="2">
    <location>
        <begin position="526"/>
        <end position="546"/>
    </location>
</feature>
<feature type="topological domain" description="Extracellular" evidence="2">
    <location>
        <begin position="547"/>
        <end position="559"/>
    </location>
</feature>
<feature type="transmembrane region" description="Helical; Name=13" evidence="2">
    <location>
        <begin position="560"/>
        <end position="580"/>
    </location>
</feature>
<feature type="topological domain" description="Cytoplasmic" evidence="2">
    <location>
        <begin position="581"/>
        <end position="585"/>
    </location>
</feature>
<feature type="modified residue" description="Phosphoserine; by PKA" evidence="1">
    <location>
        <position position="258"/>
    </location>
</feature>
<feature type="glycosylation site" description="N-linked (GlcNAc...) asparagine" evidence="2">
    <location>
        <position position="46"/>
    </location>
</feature>
<feature type="splice variant" id="VSP_016997" description="In isoform 3." evidence="11">
    <original>FCPNLSAISTNLKLSHNVA</original>
    <variation>PH</variation>
    <location>
        <begin position="122"/>
        <end position="140"/>
    </location>
</feature>
<feature type="splice variant" id="VSP_016998" description="In isoform 2." evidence="10">
    <original>DAFSDFTLARQGYPRMAFSACFGGIIFNILVGVGLGCLLQIIRNHVVEVKLEPDGLLVWVLASALGLSLIFSLVSVPLQCFQLSKAYGLCLLLFYICFLVVVLLTEFGVIHLKKA</original>
    <variation>AGARRITGVGAGQCPGPQLDLLPGLRAASVFPAQQGLRPLPPPLLHLFPCCGPAHRVWGDSPEEGVTEAAWPRGVGAILLAS</variation>
    <location>
        <begin position="471"/>
        <end position="585"/>
    </location>
</feature>
<feature type="sequence conflict" description="In Ref. 1; AAK49407." evidence="13" ref="1">
    <original>I</original>
    <variation>L</variation>
    <location>
        <position position="20"/>
    </location>
</feature>
<feature type="sequence conflict" description="In Ref. 1; AAK49407." evidence="13" ref="1">
    <original>T</original>
    <variation>A</variation>
    <location>
        <position position="228"/>
    </location>
</feature>
<feature type="sequence conflict" description="In Ref. 1; AAK49407." evidence="13" ref="1">
    <original>R</original>
    <variation>Q</variation>
    <location>
        <position position="298"/>
    </location>
</feature>
<feature type="sequence conflict" description="In Ref. 1; AAK49407." evidence="13" ref="1">
    <original>I</original>
    <variation>L</variation>
    <location>
        <position position="381"/>
    </location>
</feature>
<feature type="sequence conflict" description="In Ref. 1; AAK49407." evidence="13" ref="1">
    <original>F</original>
    <variation>L</variation>
    <location>
        <position position="451"/>
    </location>
</feature>
<feature type="sequence conflict" description="In Ref. 1; AAK49407." evidence="13" ref="1">
    <original>I</original>
    <variation>V</variation>
    <location>
        <position position="566"/>
    </location>
</feature>
<sequence length="585" mass="64365">MASRWLALLWAPVFLCVALILETASGTGDPSTKAHGHIQFSAGSVNQTAMADCRAVCGLNTSDRCDFVRRNPDCRSEAGYLDYLEGIFCYFPPNLLPLAITLYVFWLLYLFLILGVTAAKFFCPNLSAISTNLKLSHNVAGVTFLAFGNGAPDIFSALVAFSDPRTAGLAIGALFGAGVLVTTVVAGGITILHPFMAASRPFLRDIAFYMVAVFLTFTALYLGRITLTWALGYLGLYVFYVVTVIICTWVYQRQRSRSLVHSISETPELLSESEEDQMSSNTNSYDYGDEYRPLLLGRETTVQILIQALNPLDYRKWRTQSISWRVLKVVKLPVEFLLLLTVPVVDPDKDDRNWKRPLNCLQLVISPLVLVLTLQSGVYGIYEIGGLLPVWAVVVIVGTALASVTFFATSNREPPRLHWLFAFLGFLTSALWINAAATEVVNILRSLGVIFRLSNTVLGLTLLAWGNSIGDAFSDFTLARQGYPRMAFSACFGGIIFNILVGVGLGCLLQIIRNHVVEVKLEPDGLLVWVLASALGLSLIFSLVSVPLQCFQLSKAYGLCLLLFYICFLVVVLLTEFGVIHLKKA</sequence>
<proteinExistence type="evidence at transcript level"/>
<reference key="1">
    <citation type="journal article" date="2002" name="Proc. Natl. Acad. Sci. U.S.A.">
        <title>Positional cloning of the murine flavivirus resistance gene.</title>
        <authorList>
            <person name="Perelygin A.A."/>
            <person name="Scherbik S.V."/>
            <person name="Zhulin I.B."/>
            <person name="Stockman B.M."/>
            <person name="Li Y."/>
            <person name="Brinton M.A."/>
        </authorList>
    </citation>
    <scope>NUCLEOTIDE SEQUENCE [MRNA] (ISOFORM 1)</scope>
</reference>
<reference key="2">
    <citation type="journal article" date="2005" name="Science">
        <title>The transcriptional landscape of the mammalian genome.</title>
        <authorList>
            <person name="Carninci P."/>
            <person name="Kasukawa T."/>
            <person name="Katayama S."/>
            <person name="Gough J."/>
            <person name="Frith M.C."/>
            <person name="Maeda N."/>
            <person name="Oyama R."/>
            <person name="Ravasi T."/>
            <person name="Lenhard B."/>
            <person name="Wells C."/>
            <person name="Kodzius R."/>
            <person name="Shimokawa K."/>
            <person name="Bajic V.B."/>
            <person name="Brenner S.E."/>
            <person name="Batalov S."/>
            <person name="Forrest A.R."/>
            <person name="Zavolan M."/>
            <person name="Davis M.J."/>
            <person name="Wilming L.G."/>
            <person name="Aidinis V."/>
            <person name="Allen J.E."/>
            <person name="Ambesi-Impiombato A."/>
            <person name="Apweiler R."/>
            <person name="Aturaliya R.N."/>
            <person name="Bailey T.L."/>
            <person name="Bansal M."/>
            <person name="Baxter L."/>
            <person name="Beisel K.W."/>
            <person name="Bersano T."/>
            <person name="Bono H."/>
            <person name="Chalk A.M."/>
            <person name="Chiu K.P."/>
            <person name="Choudhary V."/>
            <person name="Christoffels A."/>
            <person name="Clutterbuck D.R."/>
            <person name="Crowe M.L."/>
            <person name="Dalla E."/>
            <person name="Dalrymple B.P."/>
            <person name="de Bono B."/>
            <person name="Della Gatta G."/>
            <person name="di Bernardo D."/>
            <person name="Down T."/>
            <person name="Engstrom P."/>
            <person name="Fagiolini M."/>
            <person name="Faulkner G."/>
            <person name="Fletcher C.F."/>
            <person name="Fukushima T."/>
            <person name="Furuno M."/>
            <person name="Futaki S."/>
            <person name="Gariboldi M."/>
            <person name="Georgii-Hemming P."/>
            <person name="Gingeras T.R."/>
            <person name="Gojobori T."/>
            <person name="Green R.E."/>
            <person name="Gustincich S."/>
            <person name="Harbers M."/>
            <person name="Hayashi Y."/>
            <person name="Hensch T.K."/>
            <person name="Hirokawa N."/>
            <person name="Hill D."/>
            <person name="Huminiecki L."/>
            <person name="Iacono M."/>
            <person name="Ikeo K."/>
            <person name="Iwama A."/>
            <person name="Ishikawa T."/>
            <person name="Jakt M."/>
            <person name="Kanapin A."/>
            <person name="Katoh M."/>
            <person name="Kawasawa Y."/>
            <person name="Kelso J."/>
            <person name="Kitamura H."/>
            <person name="Kitano H."/>
            <person name="Kollias G."/>
            <person name="Krishnan S.P."/>
            <person name="Kruger A."/>
            <person name="Kummerfeld S.K."/>
            <person name="Kurochkin I.V."/>
            <person name="Lareau L.F."/>
            <person name="Lazarevic D."/>
            <person name="Lipovich L."/>
            <person name="Liu J."/>
            <person name="Liuni S."/>
            <person name="McWilliam S."/>
            <person name="Madan Babu M."/>
            <person name="Madera M."/>
            <person name="Marchionni L."/>
            <person name="Matsuda H."/>
            <person name="Matsuzawa S."/>
            <person name="Miki H."/>
            <person name="Mignone F."/>
            <person name="Miyake S."/>
            <person name="Morris K."/>
            <person name="Mottagui-Tabar S."/>
            <person name="Mulder N."/>
            <person name="Nakano N."/>
            <person name="Nakauchi H."/>
            <person name="Ng P."/>
            <person name="Nilsson R."/>
            <person name="Nishiguchi S."/>
            <person name="Nishikawa S."/>
            <person name="Nori F."/>
            <person name="Ohara O."/>
            <person name="Okazaki Y."/>
            <person name="Orlando V."/>
            <person name="Pang K.C."/>
            <person name="Pavan W.J."/>
            <person name="Pavesi G."/>
            <person name="Pesole G."/>
            <person name="Petrovsky N."/>
            <person name="Piazza S."/>
            <person name="Reed J."/>
            <person name="Reid J.F."/>
            <person name="Ring B.Z."/>
            <person name="Ringwald M."/>
            <person name="Rost B."/>
            <person name="Ruan Y."/>
            <person name="Salzberg S.L."/>
            <person name="Sandelin A."/>
            <person name="Schneider C."/>
            <person name="Schoenbach C."/>
            <person name="Sekiguchi K."/>
            <person name="Semple C.A."/>
            <person name="Seno S."/>
            <person name="Sessa L."/>
            <person name="Sheng Y."/>
            <person name="Shibata Y."/>
            <person name="Shimada H."/>
            <person name="Shimada K."/>
            <person name="Silva D."/>
            <person name="Sinclair B."/>
            <person name="Sperling S."/>
            <person name="Stupka E."/>
            <person name="Sugiura K."/>
            <person name="Sultana R."/>
            <person name="Takenaka Y."/>
            <person name="Taki K."/>
            <person name="Tammoja K."/>
            <person name="Tan S.L."/>
            <person name="Tang S."/>
            <person name="Taylor M.S."/>
            <person name="Tegner J."/>
            <person name="Teichmann S.A."/>
            <person name="Ueda H.R."/>
            <person name="van Nimwegen E."/>
            <person name="Verardo R."/>
            <person name="Wei C.L."/>
            <person name="Yagi K."/>
            <person name="Yamanishi H."/>
            <person name="Zabarovsky E."/>
            <person name="Zhu S."/>
            <person name="Zimmer A."/>
            <person name="Hide W."/>
            <person name="Bult C."/>
            <person name="Grimmond S.M."/>
            <person name="Teasdale R.D."/>
            <person name="Liu E.T."/>
            <person name="Brusic V."/>
            <person name="Quackenbush J."/>
            <person name="Wahlestedt C."/>
            <person name="Mattick J.S."/>
            <person name="Hume D.A."/>
            <person name="Kai C."/>
            <person name="Sasaki D."/>
            <person name="Tomaru Y."/>
            <person name="Fukuda S."/>
            <person name="Kanamori-Katayama M."/>
            <person name="Suzuki M."/>
            <person name="Aoki J."/>
            <person name="Arakawa T."/>
            <person name="Iida J."/>
            <person name="Imamura K."/>
            <person name="Itoh M."/>
            <person name="Kato T."/>
            <person name="Kawaji H."/>
            <person name="Kawagashira N."/>
            <person name="Kawashima T."/>
            <person name="Kojima M."/>
            <person name="Kondo S."/>
            <person name="Konno H."/>
            <person name="Nakano K."/>
            <person name="Ninomiya N."/>
            <person name="Nishio T."/>
            <person name="Okada M."/>
            <person name="Plessy C."/>
            <person name="Shibata K."/>
            <person name="Shiraki T."/>
            <person name="Suzuki S."/>
            <person name="Tagami M."/>
            <person name="Waki K."/>
            <person name="Watahiki A."/>
            <person name="Okamura-Oho Y."/>
            <person name="Suzuki H."/>
            <person name="Kawai J."/>
            <person name="Hayashizaki Y."/>
        </authorList>
    </citation>
    <scope>NUCLEOTIDE SEQUENCE [LARGE SCALE MRNA] (ISOFORM 3)</scope>
    <source>
        <strain>NOD</strain>
        <tissue>Spleen</tissue>
    </source>
</reference>
<reference key="3">
    <citation type="journal article" date="2004" name="Genome Res.">
        <title>The status, quality, and expansion of the NIH full-length cDNA project: the Mammalian Gene Collection (MGC).</title>
        <authorList>
            <consortium name="The MGC Project Team"/>
        </authorList>
    </citation>
    <scope>NUCLEOTIDE SEQUENCE [LARGE SCALE MRNA] (ISOFORM 2)</scope>
    <source>
        <strain>FVB/N</strain>
        <tissue>Liver</tissue>
    </source>
</reference>
<reference key="4">
    <citation type="journal article" date="2004" name="J. Biol. Chem.">
        <title>Molecular cloning of a sixth member of the K+-dependent Na+/Ca2+ exchanger gene family, NCKX6.</title>
        <authorList>
            <person name="Cai X."/>
            <person name="Lytton J."/>
        </authorList>
    </citation>
    <scope>ALTERNATIVE SPLICING (ISOFORMS 1 AND 2)</scope>
    <scope>TISSUE SPECIFICITY</scope>
</reference>
<reference key="5">
    <citation type="journal article" date="2010" name="Proc. Natl. Acad. Sci. U.S.A.">
        <title>NCLX is an essential component of mitochondrial Na+/Ca2+ exchange.</title>
        <authorList>
            <person name="Palty R."/>
            <person name="Silverman W.F."/>
            <person name="Hershfinkel M."/>
            <person name="Caporale T."/>
            <person name="Sensi S.L."/>
            <person name="Parnis J."/>
            <person name="Nolte C."/>
            <person name="Fishman D."/>
            <person name="Shoshan-Barmatz V."/>
            <person name="Herrmann S."/>
            <person name="Khananshvili D."/>
            <person name="Sekler I."/>
        </authorList>
    </citation>
    <scope>FUNCTION</scope>
    <scope>SUBCELLULAR LOCATION</scope>
</reference>
<reference key="6">
    <citation type="journal article" date="2012" name="Cells Tissues Organs">
        <title>Expression of the sodium/calcium/potassium exchanger, NCKX4, in ameloblasts.</title>
        <authorList>
            <person name="Hu P."/>
            <person name="Lacruz R.S."/>
            <person name="Smith C.E."/>
            <person name="Smith S.M."/>
            <person name="Kurtz I."/>
            <person name="Paine M.L."/>
        </authorList>
    </citation>
    <scope>TISSUE SPECIFICITY</scope>
</reference>
<reference key="7">
    <citation type="journal article" date="2013" name="Sci. Rep.">
        <title>The mitochondrial Na+-Ca2+ exchanger, NCLX, regulates automaticity of HL-1 cardiomyocytes.</title>
        <authorList>
            <person name="Takeuchi A."/>
            <person name="Kim B."/>
            <person name="Matsuoka S."/>
        </authorList>
    </citation>
    <scope>FUNCTION</scope>
    <scope>SUBCELLULAR LOCATION</scope>
</reference>
<reference key="8">
    <citation type="journal article" date="2016" name="Sci. Rep.">
        <title>Roles of the mitochondrial Na(+)-Ca(2+) exchanger, NCLX, in B lymphocyte chemotaxis.</title>
        <authorList>
            <person name="Kim B."/>
            <person name="Takeuchi A."/>
            <person name="Hikida M."/>
            <person name="Matsuoka S."/>
        </authorList>
    </citation>
    <scope>FUNCTION</scope>
</reference>
<reference key="9">
    <citation type="journal article" date="2017" name="Nature">
        <title>The mitochondrial Na(+)/Ca(2+) exchanger is essential for Ca(2+) homeostasis and viability.</title>
        <authorList>
            <person name="Luongo T.S."/>
            <person name="Lambert J.P."/>
            <person name="Gross P."/>
            <person name="Nwokedi M."/>
            <person name="Lombardi A.A."/>
            <person name="Shanmughapriya S."/>
            <person name="Carpenter A.C."/>
            <person name="Kolmetzky D."/>
            <person name="Gao E."/>
            <person name="van Berlo J.H."/>
            <person name="Tsai E.J."/>
            <person name="Molkentin J.D."/>
            <person name="Chen X."/>
            <person name="Madesh M."/>
            <person name="Houser S.R."/>
            <person name="Elrod J.W."/>
        </authorList>
    </citation>
    <scope>FUNCTION</scope>
    <scope>DISRUPTION PHENOTYPE</scope>
    <scope>INDUCTION</scope>
</reference>
<keyword id="KW-0025">Alternative splicing</keyword>
<keyword id="KW-0050">Antiport</keyword>
<keyword id="KW-0106">Calcium</keyword>
<keyword id="KW-0109">Calcium transport</keyword>
<keyword id="KW-1003">Cell membrane</keyword>
<keyword id="KW-0325">Glycoprotein</keyword>
<keyword id="KW-0406">Ion transport</keyword>
<keyword id="KW-0452">Lithium</keyword>
<keyword id="KW-0472">Membrane</keyword>
<keyword id="KW-0496">Mitochondrion</keyword>
<keyword id="KW-0999">Mitochondrion inner membrane</keyword>
<keyword id="KW-0597">Phosphoprotein</keyword>
<keyword id="KW-1185">Reference proteome</keyword>
<keyword id="KW-0716">Sensory transduction</keyword>
<keyword id="KW-0732">Signal</keyword>
<keyword id="KW-0915">Sodium</keyword>
<keyword id="KW-0739">Sodium transport</keyword>
<keyword id="KW-0812">Transmembrane</keyword>
<keyword id="KW-1133">Transmembrane helix</keyword>
<keyword id="KW-0813">Transport</keyword>
<comment type="function">
    <text evidence="1 4 6 7 8">Mitochondrial sodium/calcium antiporter that mediates sodium-dependent calcium efflux from mitochondrion, by mediating the exchange of 3 sodium ions per 1 calcium ion (PubMed:20018762, PubMed:28445457). Plays a central role in mitochondrial calcium homeostasis by mediating mitochondrial calcium extrusion: calcium efflux is essential for mitochondrial function and cell survival, notably in cardiomyocytes (PubMed:24067497, PubMed:28445457). Regulates rates of glucose-dependent insulin secretion in pancreatic beta-cells during the first phase of insulin secretion: acts by mediating efflux of calcium from mitochondrion, thereby affecting cytoplasmic calcium responses (By similarity). Required for store-operated Ca(2+) entry (SOCE) and Ca(2+) release-activated Ca(2+) (CRAC) channel regulation: sodium transport by SLC8B1 leads to promote calcium-shuttling that modulates mitochondrial redox status, thereby regulating SOCE activity (By similarity). Involved in B-lymphocyte chemotaxis (PubMed:27328625). Able to transport Ca(2+) in exchange of either Li(+) or Na(+), explaining how Li(+) catalyzes Ca(2+) exchange (By similarity). In contrast to other members of the family its function is independent of K(+) (By similarity).</text>
</comment>
<comment type="catalytic activity">
    <reaction evidence="15 16">
        <text>Ca(2+)(in) + 3 Na(+)(out) = Ca(2+)(out) + 3 Na(+)(in)</text>
        <dbReference type="Rhea" id="RHEA:69955"/>
        <dbReference type="ChEBI" id="CHEBI:29101"/>
        <dbReference type="ChEBI" id="CHEBI:29108"/>
    </reaction>
</comment>
<comment type="catalytic activity">
    <reaction evidence="1">
        <text>3 Li(+)(out) + Ca(2+)(in) = 3 Li(+)(in) + Ca(2+)(out)</text>
        <dbReference type="Rhea" id="RHEA:72631"/>
        <dbReference type="ChEBI" id="CHEBI:29108"/>
        <dbReference type="ChEBI" id="CHEBI:49713"/>
    </reaction>
</comment>
<comment type="activity regulation">
    <text evidence="1">Inhibited by the sodium/calcium exchanger inhibitor CGP-37157 (PubMed:28445457). Strongly inhibited by zinc (By similarity).</text>
</comment>
<comment type="subcellular location">
    <subcellularLocation>
        <location evidence="4 6">Mitochondrion inner membrane</location>
        <topology evidence="4">Multi-pass membrane protein</topology>
    </subcellularLocation>
    <text>Mainly localizes to mitochondrion inner membrane (PubMed:20018762).</text>
</comment>
<comment type="subcellular location">
    <molecule>Isoform 2</molecule>
    <subcellularLocation>
        <location evidence="3">Cell membrane</location>
        <topology evidence="3">Multi-pass membrane protein</topology>
    </subcellularLocation>
</comment>
<comment type="alternative products">
    <event type="alternative splicing"/>
    <isoform>
        <id>Q925Q3-1</id>
        <name>1</name>
        <name evidence="9">L</name>
        <name evidence="9">Long</name>
        <sequence type="displayed"/>
    </isoform>
    <isoform>
        <id>Q925Q3-2</id>
        <name>2</name>
        <name evidence="9">S</name>
        <name evidence="9">Short</name>
        <sequence type="described" ref="VSP_016998"/>
    </isoform>
    <isoform>
        <id>Q925Q3-3</id>
        <name>3</name>
        <sequence type="described" ref="VSP_016997"/>
    </isoform>
</comment>
<comment type="tissue specificity">
    <text evidence="3 5">Ubiquitously expressed. Expressed in dental tissues.</text>
</comment>
<comment type="PTM">
    <text evidence="1">Phosphorylation at Ser-258 by PKA prevents calcium overload.</text>
</comment>
<comment type="disruption phenotype">
    <text evidence="8">Conditional deletion in adult hearts causes sudden death in 87% of the mice. Hearts show substantial cardiac remodeling, including an increase in heart mass and correlative change in cardiomyocyte cross-sectional area, as well as a significant increase in cardiac fibrosis. Defects are probably due to mitochondrial calcium overload leading to increased generation of superoxide and necrotic cell death.</text>
</comment>
<comment type="similarity">
    <text evidence="13">Belongs to the Ca(2+):cation antiporter (CaCA) (TC 2.A.19) family. SLC24A subfamily.</text>
</comment>
<comment type="caution">
    <text evidence="14">Isoform 1 was reported to not have cation exchanger activity (PubMed:12080145). However, such result is unclear.</text>
</comment>
<comment type="caution">
    <text evidence="3 4 6">Isoform 1 and isoform 2 were reported to localize to the endoplasmic reticulum membrane and cell membrane, respectively (PubMed:14625281). This result is however not supported by other studies that report localization to the mitochondrial membrane (PubMed:20018762, PubMed:24067497).</text>
</comment>